<keyword id="KW-0224">Dipeptidase</keyword>
<keyword id="KW-0378">Hydrolase</keyword>
<keyword id="KW-0479">Metal-binding</keyword>
<keyword id="KW-0482">Metalloprotease</keyword>
<keyword id="KW-0645">Protease</keyword>
<keyword id="KW-1185">Reference proteome</keyword>
<keyword id="KW-0862">Zinc</keyword>
<reference key="1">
    <citation type="journal article" date="2013" name="PLoS Genet.">
        <title>Plant-symbiotic fungi as chemical engineers: Multi-genome analysis of the Clavicipitaceae reveals dynamics of alkaloid loci.</title>
        <authorList>
            <person name="Schardl C.L."/>
            <person name="Young C.A."/>
            <person name="Hesse U."/>
            <person name="Amyotte S.G."/>
            <person name="Andreeva K."/>
            <person name="Calie P.J."/>
            <person name="Fleetwood D.J."/>
            <person name="Haws D.C."/>
            <person name="Moore N."/>
            <person name="Oeser B."/>
            <person name="Panaccione D.G."/>
            <person name="Schweri K.K."/>
            <person name="Voisey C.R."/>
            <person name="Farman M.L."/>
            <person name="Jaromczyk J.W."/>
            <person name="Roe B.A."/>
            <person name="O'Sullivan D.M."/>
            <person name="Scott B."/>
            <person name="Tudzynski P."/>
            <person name="An Z."/>
            <person name="Arnaoudova E.G."/>
            <person name="Bullock C.T."/>
            <person name="Charlton N.D."/>
            <person name="Chen L."/>
            <person name="Cox M."/>
            <person name="Dinkins R.D."/>
            <person name="Florea S."/>
            <person name="Glenn A.E."/>
            <person name="Gordon A."/>
            <person name="Gueldener U."/>
            <person name="Harris D.R."/>
            <person name="Hollin W."/>
            <person name="Jaromczyk J."/>
            <person name="Johnson R.D."/>
            <person name="Khan A.K."/>
            <person name="Leistner E."/>
            <person name="Leuchtmann A."/>
            <person name="Li C."/>
            <person name="Liu J."/>
            <person name="Liu J."/>
            <person name="Liu M."/>
            <person name="Mace W."/>
            <person name="Machado C."/>
            <person name="Nagabhyru P."/>
            <person name="Pan J."/>
            <person name="Schmid J."/>
            <person name="Sugawara K."/>
            <person name="Steiner U."/>
            <person name="Takach J.E."/>
            <person name="Tanaka E."/>
            <person name="Webb J.S."/>
            <person name="Wilson E.V."/>
            <person name="Wiseman J.L."/>
            <person name="Yoshida R."/>
            <person name="Zeng Z."/>
        </authorList>
    </citation>
    <scope>NUCLEOTIDE SEQUENCE [LARGE SCALE GENOMIC DNA]</scope>
    <source>
        <strain>20.1</strain>
    </source>
</reference>
<reference key="2">
    <citation type="journal article" date="2016" name="PLoS ONE">
        <title>The epipolythiodiketopiperazine gene cluster in Claviceps purpurea: dysfunctional cytochrome P450 enzyme prevents formation of the previously unknown clapurines.</title>
        <authorList>
            <person name="Dopstadt J."/>
            <person name="Neubauer L."/>
            <person name="Tudzynski P."/>
            <person name="Humpf H.U."/>
        </authorList>
    </citation>
    <scope>FUNCTION</scope>
    <scope>INDUCTION</scope>
</reference>
<organism>
    <name type="scientific">Claviceps purpurea (strain 20.1)</name>
    <name type="common">Ergot fungus</name>
    <name type="synonym">Sphacelia segetum</name>
    <dbReference type="NCBI Taxonomy" id="1111077"/>
    <lineage>
        <taxon>Eukaryota</taxon>
        <taxon>Fungi</taxon>
        <taxon>Dikarya</taxon>
        <taxon>Ascomycota</taxon>
        <taxon>Pezizomycotina</taxon>
        <taxon>Sordariomycetes</taxon>
        <taxon>Hypocreomycetidae</taxon>
        <taxon>Hypocreales</taxon>
        <taxon>Clavicipitaceae</taxon>
        <taxon>Claviceps</taxon>
    </lineage>
</organism>
<sequence length="425" mass="47461">MATAAQPSLELALELMSKVPLIGNISQSTHKIPIQCTGLTREQDGHNDWMHMIRAYYDFQVDDRFQPTKDLAGHVDLKRLVQGRAGAVFWSVYVECPKGENDFSDAVHHASMRDTFQQIDLLQRIMELYSDRMEMAHKADDVMRIFRSGKCASLMGAEGLHQLGNSSSVLRIFHRLGVRYVTLAHAKNNLYVDSATSEAPIHHGLSPQGRDMVREMNRIGMIVDLSHVSEKAMVDALDVSLAPVIFSHSSAYALVPHVRNVPDHVLDRLKQNRGIIMISFIPWLTNKDPEKATVENVVDHVLHVGNRIGFDHLGLGSDFDGMPSHVQGLEDVSKYPNVVAAMLQRGISTENVEKIMGMNVIRVLREVEDVAASQKGLLPVLEDAVPQLWDDGIRAYVKKLYPHAEHDRTGASETTTVDKAIEKDV</sequence>
<evidence type="ECO:0000255" key="1">
    <source>
        <dbReference type="PROSITE-ProRule" id="PRU10073"/>
    </source>
</evidence>
<evidence type="ECO:0000269" key="2">
    <source>
    </source>
</evidence>
<evidence type="ECO:0000303" key="3">
    <source>
    </source>
</evidence>
<evidence type="ECO:0000305" key="4"/>
<gene>
    <name evidence="3" type="primary">tcpJ</name>
    <name type="ORF">CPUR_02673</name>
</gene>
<proteinExistence type="evidence at transcript level"/>
<feature type="chain" id="PRO_0000437704" description="Dipeptidase tcpJ">
    <location>
        <begin position="1"/>
        <end position="425"/>
    </location>
</feature>
<feature type="binding site" evidence="1">
    <location>
        <position position="46"/>
    </location>
    <ligand>
        <name>Zn(2+)</name>
        <dbReference type="ChEBI" id="CHEBI:29105"/>
        <note>catalytic</note>
    </ligand>
</feature>
<feature type="binding site" evidence="1">
    <location>
        <position position="48"/>
    </location>
    <ligand>
        <name>Zn(2+)</name>
        <dbReference type="ChEBI" id="CHEBI:29105"/>
        <note>catalytic</note>
    </ligand>
</feature>
<feature type="binding site" evidence="1">
    <location>
        <position position="158"/>
    </location>
    <ligand>
        <name>Zn(2+)</name>
        <dbReference type="ChEBI" id="CHEBI:29105"/>
        <note>catalytic</note>
    </ligand>
</feature>
<feature type="binding site" evidence="1">
    <location>
        <position position="185"/>
    </location>
    <ligand>
        <name>substrate</name>
    </ligand>
</feature>
<feature type="binding site" evidence="1">
    <location>
        <position position="259"/>
    </location>
    <ligand>
        <name>substrate</name>
    </ligand>
</feature>
<feature type="binding site" evidence="1">
    <location>
        <position position="318"/>
    </location>
    <ligand>
        <name>substrate</name>
    </ligand>
</feature>
<comment type="function">
    <text evidence="2">Dipeptidase; part of the gene cluster that mediates the biosynthesis of an unusual class of epipolythiodioxopiperazines (ETPs) lacking the reactive thiol group important for toxicity (PubMed:27390873). Firstly, L-tyrosine is prenylated by tcpD, before undergoing condensation with L-glycine in a reaction catalyzed by the NRPS tcpP leading to the diketopiperazine (DKP) backbone (PubMed:27390873). Afterwards the alpha-carbon of tyrosine is oxidized by the cytochrome P450 tcpC to form a hydroxyl group (PubMed:27390873). However, in contrast other ETP biosynthesis pathways studied so far, tcpC is not able to bishydroxylate the DKP at both alpha-carbon positions, but hydroxylates the alpha-carbon of the tyrosine part and the nitrogen of the glycine part (PubMed:27390873). The next steps involve an alpha,beta-elimination reaction catalyzed by tcpI, a methylation by the methyltransferase tcpN the action of the four enzyme cascade tcpG/K/J/I (PubMed:27390873). Due to a dysfunctional cytochrome P450 monooxygenase tcpC, the pathway leads to the biosynthesis of probable non-toxic metabolites lacking the reactive thiol group (PubMed:27390873).</text>
</comment>
<comment type="catalytic activity">
    <reaction evidence="1">
        <text>an L-aminoacyl-L-amino acid + H2O = 2 an L-alpha-amino acid</text>
        <dbReference type="Rhea" id="RHEA:48940"/>
        <dbReference type="ChEBI" id="CHEBI:15377"/>
        <dbReference type="ChEBI" id="CHEBI:59869"/>
        <dbReference type="ChEBI" id="CHEBI:77460"/>
        <dbReference type="EC" id="3.4.13.19"/>
    </reaction>
</comment>
<comment type="cofactor">
    <cofactor evidence="1">
        <name>Zn(2+)</name>
        <dbReference type="ChEBI" id="CHEBI:29105"/>
    </cofactor>
</comment>
<comment type="induction">
    <text evidence="2">Expression is positively regulated by the thioclapurine cluster-specific transcription factor tcpZ (PubMed:27390873).</text>
</comment>
<comment type="similarity">
    <text evidence="1">Belongs to the metallo-dependent hydrolases superfamily. Peptidase M19 family.</text>
</comment>
<name>TCPJ_CLAP2</name>
<protein>
    <recommendedName>
        <fullName evidence="4">Dipeptidase tcpJ</fullName>
        <ecNumber evidence="1">3.4.13.19</ecNumber>
    </recommendedName>
    <alternativeName>
        <fullName evidence="3">Thiocalpurine biosynthesis protein J</fullName>
    </alternativeName>
</protein>
<dbReference type="EC" id="3.4.13.19" evidence="1"/>
<dbReference type="EMBL" id="CAGA01000011">
    <property type="protein sequence ID" value="CCE28982.1"/>
    <property type="molecule type" value="Genomic_DNA"/>
</dbReference>
<dbReference type="SMR" id="M1VV65"/>
<dbReference type="VEuPathDB" id="FungiDB:CPUR_02673"/>
<dbReference type="eggNOG" id="KOG4127">
    <property type="taxonomic scope" value="Eukaryota"/>
</dbReference>
<dbReference type="HOGENOM" id="CLU_031404_4_0_1"/>
<dbReference type="OrthoDB" id="445695at2759"/>
<dbReference type="Proteomes" id="UP000016801">
    <property type="component" value="Unassembled WGS sequence"/>
</dbReference>
<dbReference type="GO" id="GO:0046872">
    <property type="term" value="F:metal ion binding"/>
    <property type="evidence" value="ECO:0007669"/>
    <property type="project" value="UniProtKB-KW"/>
</dbReference>
<dbReference type="GO" id="GO:0070573">
    <property type="term" value="F:metallodipeptidase activity"/>
    <property type="evidence" value="ECO:0007669"/>
    <property type="project" value="InterPro"/>
</dbReference>
<dbReference type="GO" id="GO:0006508">
    <property type="term" value="P:proteolysis"/>
    <property type="evidence" value="ECO:0007669"/>
    <property type="project" value="UniProtKB-KW"/>
</dbReference>
<dbReference type="CDD" id="cd01301">
    <property type="entry name" value="rDP_like"/>
    <property type="match status" value="1"/>
</dbReference>
<dbReference type="Gene3D" id="3.20.20.140">
    <property type="entry name" value="Metal-dependent hydrolases"/>
    <property type="match status" value="1"/>
</dbReference>
<dbReference type="InterPro" id="IPR032466">
    <property type="entry name" value="Metal_Hydrolase"/>
</dbReference>
<dbReference type="InterPro" id="IPR008257">
    <property type="entry name" value="Pept_M19"/>
</dbReference>
<dbReference type="PANTHER" id="PTHR10443:SF12">
    <property type="entry name" value="DIPEPTIDASE"/>
    <property type="match status" value="1"/>
</dbReference>
<dbReference type="PANTHER" id="PTHR10443">
    <property type="entry name" value="MICROSOMAL DIPEPTIDASE"/>
    <property type="match status" value="1"/>
</dbReference>
<dbReference type="Pfam" id="PF01244">
    <property type="entry name" value="Peptidase_M19"/>
    <property type="match status" value="1"/>
</dbReference>
<dbReference type="SUPFAM" id="SSF51556">
    <property type="entry name" value="Metallo-dependent hydrolases"/>
    <property type="match status" value="1"/>
</dbReference>
<dbReference type="PROSITE" id="PS51365">
    <property type="entry name" value="RENAL_DIPEPTIDASE_2"/>
    <property type="match status" value="1"/>
</dbReference>
<accession>M1VV65</accession>